<evidence type="ECO:0000250" key="1">
    <source>
        <dbReference type="UniProtKB" id="A0A8B7DWS6"/>
    </source>
</evidence>
<evidence type="ECO:0000250" key="2">
    <source>
        <dbReference type="UniProtKB" id="B9W5G6"/>
    </source>
</evidence>
<evidence type="ECO:0000250" key="3">
    <source>
        <dbReference type="UniProtKB" id="P07845"/>
    </source>
</evidence>
<evidence type="ECO:0000250" key="4">
    <source>
        <dbReference type="UniProtKB" id="P61914"/>
    </source>
</evidence>
<evidence type="ECO:0000255" key="5"/>
<evidence type="ECO:0000269" key="6">
    <source>
    </source>
</evidence>
<evidence type="ECO:0000303" key="7">
    <source>
    </source>
</evidence>
<evidence type="ECO:0000303" key="8">
    <source>
    </source>
</evidence>
<evidence type="ECO:0000305" key="9"/>
<dbReference type="SMR" id="A0A8B7DY61"/>
<dbReference type="EnsemblMetazoa" id="XM_012707034.2">
    <property type="protein sequence ID" value="XP_012562488.1"/>
    <property type="gene ID" value="LOC105847445"/>
</dbReference>
<dbReference type="OrthoDB" id="2304600at2759"/>
<dbReference type="Proteomes" id="UP000694840">
    <property type="component" value="Unplaced"/>
</dbReference>
<dbReference type="GO" id="GO:0005576">
    <property type="term" value="C:extracellular region"/>
    <property type="evidence" value="ECO:0007669"/>
    <property type="project" value="UniProtKB-SubCell"/>
</dbReference>
<dbReference type="GO" id="GO:0042151">
    <property type="term" value="C:nematocyst"/>
    <property type="evidence" value="ECO:0007669"/>
    <property type="project" value="UniProtKB-SubCell"/>
</dbReference>
<dbReference type="GO" id="GO:0044218">
    <property type="term" value="C:other organism cell membrane"/>
    <property type="evidence" value="ECO:0007669"/>
    <property type="project" value="UniProtKB-KW"/>
</dbReference>
<dbReference type="GO" id="GO:0046930">
    <property type="term" value="C:pore complex"/>
    <property type="evidence" value="ECO:0007669"/>
    <property type="project" value="InterPro"/>
</dbReference>
<dbReference type="GO" id="GO:0015267">
    <property type="term" value="F:channel activity"/>
    <property type="evidence" value="ECO:0007669"/>
    <property type="project" value="InterPro"/>
</dbReference>
<dbReference type="GO" id="GO:0090729">
    <property type="term" value="F:toxin activity"/>
    <property type="evidence" value="ECO:0007669"/>
    <property type="project" value="UniProtKB-KW"/>
</dbReference>
<dbReference type="GO" id="GO:0051715">
    <property type="term" value="P:cytolysis in another organism"/>
    <property type="evidence" value="ECO:0007669"/>
    <property type="project" value="InterPro"/>
</dbReference>
<dbReference type="GO" id="GO:0006812">
    <property type="term" value="P:monoatomic cation transport"/>
    <property type="evidence" value="ECO:0007669"/>
    <property type="project" value="InterPro"/>
</dbReference>
<dbReference type="GO" id="GO:0046931">
    <property type="term" value="P:pore complex assembly"/>
    <property type="evidence" value="ECO:0007669"/>
    <property type="project" value="InterPro"/>
</dbReference>
<dbReference type="Gene3D" id="2.60.270.20">
    <property type="entry name" value="Cytolysin/lectin"/>
    <property type="match status" value="1"/>
</dbReference>
<dbReference type="InterPro" id="IPR050677">
    <property type="entry name" value="Actinoporin_PFT"/>
</dbReference>
<dbReference type="InterPro" id="IPR009104">
    <property type="entry name" value="Anemon_actinoporin-like"/>
</dbReference>
<dbReference type="InterPro" id="IPR015926">
    <property type="entry name" value="Cytolysin/lectin"/>
</dbReference>
<dbReference type="PANTHER" id="PTHR40388">
    <property type="entry name" value="BRYOPORIN"/>
    <property type="match status" value="1"/>
</dbReference>
<dbReference type="PANTHER" id="PTHR40388:SF1">
    <property type="entry name" value="BRYOPORIN"/>
    <property type="match status" value="1"/>
</dbReference>
<dbReference type="Pfam" id="PF06369">
    <property type="entry name" value="Anemone_cytotox"/>
    <property type="match status" value="1"/>
</dbReference>
<dbReference type="SUPFAM" id="SSF63724">
    <property type="entry name" value="Cytolysin/lectin"/>
    <property type="match status" value="1"/>
</dbReference>
<accession>A0A8B7DY61</accession>
<keyword id="KW-0472">Membrane</keyword>
<keyword id="KW-0166">Nematocyst</keyword>
<keyword id="KW-1185">Reference proteome</keyword>
<keyword id="KW-0964">Secreted</keyword>
<keyword id="KW-0732">Signal</keyword>
<keyword id="KW-1052">Target cell membrane</keyword>
<keyword id="KW-1053">Target membrane</keyword>
<keyword id="KW-0800">Toxin</keyword>
<keyword id="KW-0812">Transmembrane</keyword>
<sequence>MLVYVCLVVILIQLPFGAAGGAALGVIAKVSVDAALQQIDDVWKENTVRYWKCAVENRSTKTLYALGTTQESGSMSTIFADIPPQSTGVFVWEKSRGAATGAAGVVHYEYDNKILSIMASIPYDWNLYSAWANVHLSDHKKGFSDLYNGKNGARYPTRAGNWGNVDGTKFFLTDKSHAEFKVIFSG</sequence>
<reference key="1">
    <citation type="journal article" date="2014" name="Toxicon">
        <title>Hydra actinoporin-like toxin-1, an unusual hemolysin from the nematocyst venom of Hydra magnipapillata which belongs to an extended gene family.</title>
        <authorList>
            <person name="Glasser E."/>
            <person name="Rachamim T."/>
            <person name="Aharonovich D."/>
            <person name="Sher D."/>
        </authorList>
    </citation>
    <scope>NUCLEOTIDE SEQUENCE [GENOMIC DNA]</scope>
</reference>
<reference key="2">
    <citation type="journal article" date="2019" name="Toxicon">
        <title>Expansion of Hydra actinoporin-like toxin (HALT) gene family: expression divergence and functional convergence evolved through gene duplication.</title>
        <authorList>
            <person name="Yap W.Y."/>
            <person name="Tan K.J.S.X."/>
            <person name="Hwang J.S."/>
        </authorList>
    </citation>
    <scope>NUCLEOTIDE SEQUENCE [MRNA]</scope>
    <scope>FUNCTION</scope>
    <scope>DEVELOPMENTAL STAGE</scope>
    <scope>RECOMBINANT EXPRESSION</scope>
</reference>
<comment type="function">
    <text evidence="1 2 6">Pore-forming protein that forms hydrophilic pores and causes cytolysis (PubMed:31513812). Compared to equinatoxin-2 (AC P61914), it reveals lower cytolysis activity (5-12-fold difference, tested on erythrocytes), a larger pore size (probably 2-3 nm) and different affinity to membrane lipids (100-fold lower affinity to sphingomyelin) (By similarity). Binds to sulfatides (PubMed:31513812). Shows cytolytic activity on HeLa cells, with a different potency than its paralogs (from most potent to less potent: HALT-4&gt;HALT-6~HALT-1&gt;HALT-3&gt;HALT-7&gt;HALT-2) (PubMed:31513812). Pore formation is a multi-step process that involves specific recognition of membrane lipid by a protein aromatic residues rich region, firm binding to the membrane (mainly driven by hydrophobic interactions) accompanied by the transfer of the N-terminal region to the lipid-water interface and finally pore formation after oligomerization of monomers (By similarity). In vitro, binds to the folate receptor alpha (FOLR1), a GPI-anchored membrane protein that plays a major role in the uptake of folate/folic acid into cells via endocytosis, suggesting a possible involvement of this receptor in the mechanism of HALT-1-induced cell lysis (By similarity). In vivo, does not cause visible paralysis in larvae of the blowfly Sarcophaga faculata, the most common arthropod prey of Hydra (By similarity).</text>
</comment>
<comment type="subunit">
    <text evidence="1 2">Octamer or nonamer in membranes (By similarity). Monomer in the soluble state (By similarity). In vitro, interacts with folate receptor alpha (of target organism) (By similarity).</text>
</comment>
<comment type="subcellular location">
    <subcellularLocation>
        <location evidence="2">Nematocyst</location>
    </subcellularLocation>
    <subcellularLocation>
        <location evidence="2">Secreted</location>
    </subcellularLocation>
    <subcellularLocation>
        <location evidence="2">Target cell membrane</location>
    </subcellularLocation>
    <text evidence="1 2">Is found in differentiating stenoteles (one type of nematocyst) (By similarity). Forms an alpha-helical membrane channel in the prey (By similarity).</text>
</comment>
<comment type="tissue specificity">
    <text evidence="6">Expressed female germline during oogenesis.</text>
</comment>
<comment type="developmental stage">
    <text evidence="6">Is expressed during oogenesis in female germline.</text>
</comment>
<comment type="domain">
    <text evidence="4">Composed of a long N-terminal alpha-helix and a core region rich in beta-sheet structures. Before the pore formation, the alpha-helix binds the lipid membrane, partitions into the lipid-water interface and stabilizes the monomeric molecule on the membrane. Finally, it traverses the bilayer, thus forming the transmembrane pore.</text>
</comment>
<comment type="similarity">
    <text evidence="9">Belongs to the actinoporin family. HALT subfamily.</text>
</comment>
<organism>
    <name type="scientific">Hydra vulgaris</name>
    <name type="common">Hydra</name>
    <name type="synonym">Hydra attenuata</name>
    <dbReference type="NCBI Taxonomy" id="6087"/>
    <lineage>
        <taxon>Eukaryota</taxon>
        <taxon>Metazoa</taxon>
        <taxon>Cnidaria</taxon>
        <taxon>Hydrozoa</taxon>
        <taxon>Hydroidolina</taxon>
        <taxon>Anthoathecata</taxon>
        <taxon>Aplanulata</taxon>
        <taxon>Hydridae</taxon>
        <taxon>Hydra</taxon>
    </lineage>
</organism>
<feature type="signal peptide" evidence="5">
    <location>
        <begin position="1"/>
        <end position="21"/>
    </location>
</feature>
<feature type="chain" id="PRO_0000456795" description="Hydra actinoporin-like toxin 6">
    <location>
        <begin position="22"/>
        <end position="186"/>
    </location>
</feature>
<feature type="short sequence motif" description="Cell attachment site" evidence="3">
    <location>
        <begin position="158"/>
        <end position="160"/>
    </location>
</feature>
<name>ACTL6_HYDVU</name>
<proteinExistence type="evidence at transcript level"/>
<protein>
    <recommendedName>
        <fullName evidence="7 8">Hydra actinoporin-like toxin 6</fullName>
        <shortName evidence="7 8">HALT-6</shortName>
    </recommendedName>
    <alternativeName>
        <fullName evidence="7">Alpha-pore-forming toxin</fullName>
        <shortName evidence="7">alpha-PFT</shortName>
    </alternativeName>
    <alternativeName>
        <fullName evidence="9">DELTA-hydritoxin-Hma1f</fullName>
        <shortName evidence="9">DELTA-HYTX-Hma1f</shortName>
    </alternativeName>
</protein>